<evidence type="ECO:0000255" key="1">
    <source>
        <dbReference type="HAMAP-Rule" id="MF_00082"/>
    </source>
</evidence>
<sequence>MTTLENPEMQAQLLSAALPYMQRYENKHVVVKYGGHAMGNPELGKAFARDVALLKQSGVNPIVVHGGGPQIQAMLTKLGIESRFEGGLRVTDEKTVEVVEMVLAGSINKEIVALINAEGEWAIGLCGKDGNMVFAQKAHKTVIDPDSNIEKVLDLGFVGEPAEVDRTLLDLLARSEMIPVIAPVAPGRDGHTYNINADTFAGAIAGALAATRLLFLTNVPGVLDKDKKLIKELSVADAQALIRDGTISGGMIPKVETCIDAIRRGVEGVVILNGKTPHSVLLELFTEHGAGTLIVP</sequence>
<keyword id="KW-0028">Amino-acid biosynthesis</keyword>
<keyword id="KW-0055">Arginine biosynthesis</keyword>
<keyword id="KW-0067">ATP-binding</keyword>
<keyword id="KW-0963">Cytoplasm</keyword>
<keyword id="KW-0418">Kinase</keyword>
<keyword id="KW-0547">Nucleotide-binding</keyword>
<keyword id="KW-0808">Transferase</keyword>
<gene>
    <name evidence="1" type="primary">argB</name>
    <name type="ordered locus">BruAb2_0965</name>
</gene>
<comment type="function">
    <text evidence="1">Catalyzes the ATP-dependent phosphorylation of N-acetyl-L-glutamate.</text>
</comment>
<comment type="catalytic activity">
    <reaction evidence="1">
        <text>N-acetyl-L-glutamate + ATP = N-acetyl-L-glutamyl 5-phosphate + ADP</text>
        <dbReference type="Rhea" id="RHEA:14629"/>
        <dbReference type="ChEBI" id="CHEBI:30616"/>
        <dbReference type="ChEBI" id="CHEBI:44337"/>
        <dbReference type="ChEBI" id="CHEBI:57936"/>
        <dbReference type="ChEBI" id="CHEBI:456216"/>
        <dbReference type="EC" id="2.7.2.8"/>
    </reaction>
</comment>
<comment type="pathway">
    <text evidence="1">Amino-acid biosynthesis; L-arginine biosynthesis; N(2)-acetyl-L-ornithine from L-glutamate: step 2/4.</text>
</comment>
<comment type="subcellular location">
    <subcellularLocation>
        <location evidence="1">Cytoplasm</location>
    </subcellularLocation>
</comment>
<comment type="similarity">
    <text evidence="1">Belongs to the acetylglutamate kinase family. ArgB subfamily.</text>
</comment>
<accession>Q576T8</accession>
<proteinExistence type="inferred from homology"/>
<protein>
    <recommendedName>
        <fullName evidence="1">Acetylglutamate kinase</fullName>
        <ecNumber evidence="1">2.7.2.8</ecNumber>
    </recommendedName>
    <alternativeName>
        <fullName evidence="1">N-acetyl-L-glutamate 5-phosphotransferase</fullName>
    </alternativeName>
    <alternativeName>
        <fullName evidence="1">NAG kinase</fullName>
        <shortName evidence="1">NAGK</shortName>
    </alternativeName>
</protein>
<reference key="1">
    <citation type="journal article" date="2005" name="J. Bacteriol.">
        <title>Completion of the genome sequence of Brucella abortus and comparison to the highly similar genomes of Brucella melitensis and Brucella suis.</title>
        <authorList>
            <person name="Halling S.M."/>
            <person name="Peterson-Burch B.D."/>
            <person name="Bricker B.J."/>
            <person name="Zuerner R.L."/>
            <person name="Qing Z."/>
            <person name="Li L.-L."/>
            <person name="Kapur V."/>
            <person name="Alt D.P."/>
            <person name="Olsen S.C."/>
        </authorList>
    </citation>
    <scope>NUCLEOTIDE SEQUENCE [LARGE SCALE GENOMIC DNA]</scope>
    <source>
        <strain>9-941</strain>
    </source>
</reference>
<organism>
    <name type="scientific">Brucella abortus biovar 1 (strain 9-941)</name>
    <dbReference type="NCBI Taxonomy" id="262698"/>
    <lineage>
        <taxon>Bacteria</taxon>
        <taxon>Pseudomonadati</taxon>
        <taxon>Pseudomonadota</taxon>
        <taxon>Alphaproteobacteria</taxon>
        <taxon>Hyphomicrobiales</taxon>
        <taxon>Brucellaceae</taxon>
        <taxon>Brucella/Ochrobactrum group</taxon>
        <taxon>Brucella</taxon>
    </lineage>
</organism>
<name>ARGB_BRUAB</name>
<feature type="chain" id="PRO_0000264684" description="Acetylglutamate kinase">
    <location>
        <begin position="1"/>
        <end position="296"/>
    </location>
</feature>
<feature type="binding site" evidence="1">
    <location>
        <begin position="67"/>
        <end position="68"/>
    </location>
    <ligand>
        <name>substrate</name>
    </ligand>
</feature>
<feature type="binding site" evidence="1">
    <location>
        <position position="89"/>
    </location>
    <ligand>
        <name>substrate</name>
    </ligand>
</feature>
<feature type="binding site" evidence="1">
    <location>
        <position position="194"/>
    </location>
    <ligand>
        <name>substrate</name>
    </ligand>
</feature>
<feature type="site" description="Transition state stabilizer" evidence="1">
    <location>
        <position position="32"/>
    </location>
</feature>
<feature type="site" description="Transition state stabilizer" evidence="1">
    <location>
        <position position="254"/>
    </location>
</feature>
<dbReference type="EC" id="2.7.2.8" evidence="1"/>
<dbReference type="EMBL" id="AE017224">
    <property type="protein sequence ID" value="AAX76346.1"/>
    <property type="molecule type" value="Genomic_DNA"/>
</dbReference>
<dbReference type="RefSeq" id="WP_002965625.1">
    <property type="nucleotide sequence ID" value="NC_006933.1"/>
</dbReference>
<dbReference type="SMR" id="Q576T8"/>
<dbReference type="EnsemblBacteria" id="AAX76346">
    <property type="protein sequence ID" value="AAX76346"/>
    <property type="gene ID" value="BruAb2_0965"/>
</dbReference>
<dbReference type="GeneID" id="93015191"/>
<dbReference type="KEGG" id="bmb:BruAb2_0965"/>
<dbReference type="HOGENOM" id="CLU_053680_0_0_5"/>
<dbReference type="UniPathway" id="UPA00068">
    <property type="reaction ID" value="UER00107"/>
</dbReference>
<dbReference type="Proteomes" id="UP000000540">
    <property type="component" value="Chromosome II"/>
</dbReference>
<dbReference type="GO" id="GO:0005737">
    <property type="term" value="C:cytoplasm"/>
    <property type="evidence" value="ECO:0007669"/>
    <property type="project" value="UniProtKB-SubCell"/>
</dbReference>
<dbReference type="GO" id="GO:0003991">
    <property type="term" value="F:acetylglutamate kinase activity"/>
    <property type="evidence" value="ECO:0007669"/>
    <property type="project" value="UniProtKB-UniRule"/>
</dbReference>
<dbReference type="GO" id="GO:0005524">
    <property type="term" value="F:ATP binding"/>
    <property type="evidence" value="ECO:0007669"/>
    <property type="project" value="UniProtKB-UniRule"/>
</dbReference>
<dbReference type="GO" id="GO:0042450">
    <property type="term" value="P:arginine biosynthetic process via ornithine"/>
    <property type="evidence" value="ECO:0007669"/>
    <property type="project" value="UniProtKB-UniRule"/>
</dbReference>
<dbReference type="GO" id="GO:0006526">
    <property type="term" value="P:L-arginine biosynthetic process"/>
    <property type="evidence" value="ECO:0007669"/>
    <property type="project" value="UniProtKB-UniPathway"/>
</dbReference>
<dbReference type="CDD" id="cd04250">
    <property type="entry name" value="AAK_NAGK-C"/>
    <property type="match status" value="1"/>
</dbReference>
<dbReference type="FunFam" id="3.40.1160.10:FF:000004">
    <property type="entry name" value="Acetylglutamate kinase"/>
    <property type="match status" value="1"/>
</dbReference>
<dbReference type="Gene3D" id="3.40.1160.10">
    <property type="entry name" value="Acetylglutamate kinase-like"/>
    <property type="match status" value="1"/>
</dbReference>
<dbReference type="HAMAP" id="MF_00082">
    <property type="entry name" value="ArgB"/>
    <property type="match status" value="1"/>
</dbReference>
<dbReference type="InterPro" id="IPR036393">
    <property type="entry name" value="AceGlu_kinase-like_sf"/>
</dbReference>
<dbReference type="InterPro" id="IPR004662">
    <property type="entry name" value="AcgluKinase_fam"/>
</dbReference>
<dbReference type="InterPro" id="IPR037528">
    <property type="entry name" value="ArgB"/>
</dbReference>
<dbReference type="InterPro" id="IPR001048">
    <property type="entry name" value="Asp/Glu/Uridylate_kinase"/>
</dbReference>
<dbReference type="InterPro" id="IPR041727">
    <property type="entry name" value="NAGK-C"/>
</dbReference>
<dbReference type="NCBIfam" id="TIGR00761">
    <property type="entry name" value="argB"/>
    <property type="match status" value="1"/>
</dbReference>
<dbReference type="PANTHER" id="PTHR23342">
    <property type="entry name" value="N-ACETYLGLUTAMATE SYNTHASE"/>
    <property type="match status" value="1"/>
</dbReference>
<dbReference type="PANTHER" id="PTHR23342:SF0">
    <property type="entry name" value="N-ACETYLGLUTAMATE SYNTHASE, MITOCHONDRIAL"/>
    <property type="match status" value="1"/>
</dbReference>
<dbReference type="Pfam" id="PF00696">
    <property type="entry name" value="AA_kinase"/>
    <property type="match status" value="1"/>
</dbReference>
<dbReference type="PIRSF" id="PIRSF000728">
    <property type="entry name" value="NAGK"/>
    <property type="match status" value="1"/>
</dbReference>
<dbReference type="SUPFAM" id="SSF53633">
    <property type="entry name" value="Carbamate kinase-like"/>
    <property type="match status" value="1"/>
</dbReference>